<keyword id="KW-0007">Acetylation</keyword>
<keyword id="KW-0049">Antioxidant</keyword>
<keyword id="KW-0963">Cytoplasm</keyword>
<keyword id="KW-0560">Oxidoreductase</keyword>
<keyword id="KW-0575">Peroxidase</keyword>
<keyword id="KW-1185">Reference proteome</keyword>
<proteinExistence type="inferred from homology"/>
<accession>P0C0L3</accession>
<accession>P23929</accession>
<accession>P77655</accession>
<dbReference type="EC" id="1.11.1.-"/>
<dbReference type="EMBL" id="AE005674">
    <property type="protein sequence ID" value="AAN43315.1"/>
    <property type="molecule type" value="Genomic_DNA"/>
</dbReference>
<dbReference type="EMBL" id="AE014073">
    <property type="protein sequence ID" value="AAP17201.1"/>
    <property type="molecule type" value="Genomic_DNA"/>
</dbReference>
<dbReference type="RefSeq" id="NP_707608.1">
    <property type="nucleotide sequence ID" value="NC_004337.2"/>
</dbReference>
<dbReference type="RefSeq" id="WP_000152305.1">
    <property type="nucleotide sequence ID" value="NZ_WPGW01000136.1"/>
</dbReference>
<dbReference type="SMR" id="P0C0L3"/>
<dbReference type="STRING" id="198214.SF1743"/>
<dbReference type="PaxDb" id="198214-SF1743"/>
<dbReference type="GeneID" id="1024939"/>
<dbReference type="GeneID" id="75203185"/>
<dbReference type="KEGG" id="sfl:SF1743"/>
<dbReference type="KEGG" id="sfx:S1876"/>
<dbReference type="PATRIC" id="fig|198214.7.peg.2066"/>
<dbReference type="HOGENOM" id="CLU_106355_1_0_6"/>
<dbReference type="Proteomes" id="UP000001006">
    <property type="component" value="Chromosome"/>
</dbReference>
<dbReference type="Proteomes" id="UP000002673">
    <property type="component" value="Chromosome"/>
</dbReference>
<dbReference type="GO" id="GO:0005737">
    <property type="term" value="C:cytoplasm"/>
    <property type="evidence" value="ECO:0007669"/>
    <property type="project" value="UniProtKB-SubCell"/>
</dbReference>
<dbReference type="GO" id="GO:0051920">
    <property type="term" value="F:peroxiredoxin activity"/>
    <property type="evidence" value="ECO:0007669"/>
    <property type="project" value="RHEA"/>
</dbReference>
<dbReference type="GO" id="GO:0006979">
    <property type="term" value="P:response to oxidative stress"/>
    <property type="evidence" value="ECO:0007669"/>
    <property type="project" value="InterPro"/>
</dbReference>
<dbReference type="FunFam" id="3.30.300.20:FF:000010">
    <property type="entry name" value="OsmC family peroxiredoxin"/>
    <property type="match status" value="1"/>
</dbReference>
<dbReference type="Gene3D" id="3.30.300.20">
    <property type="match status" value="1"/>
</dbReference>
<dbReference type="InterPro" id="IPR015946">
    <property type="entry name" value="KH_dom-like_a/b"/>
</dbReference>
<dbReference type="InterPro" id="IPR003718">
    <property type="entry name" value="OsmC/Ohr_fam"/>
</dbReference>
<dbReference type="InterPro" id="IPR036102">
    <property type="entry name" value="OsmC/Ohrsf"/>
</dbReference>
<dbReference type="InterPro" id="IPR052707">
    <property type="entry name" value="OsmC_Ohr_Peroxiredoxin"/>
</dbReference>
<dbReference type="InterPro" id="IPR019904">
    <property type="entry name" value="Peroxiredoxin_OsmC"/>
</dbReference>
<dbReference type="NCBIfam" id="TIGR03562">
    <property type="entry name" value="osmo_induc_OsmC"/>
    <property type="match status" value="1"/>
</dbReference>
<dbReference type="PANTHER" id="PTHR42830">
    <property type="entry name" value="OSMOTICALLY INDUCIBLE FAMILY PROTEIN"/>
    <property type="match status" value="1"/>
</dbReference>
<dbReference type="PANTHER" id="PTHR42830:SF1">
    <property type="entry name" value="OSMOTICALLY INDUCIBLE FAMILY PROTEIN"/>
    <property type="match status" value="1"/>
</dbReference>
<dbReference type="Pfam" id="PF02566">
    <property type="entry name" value="OsmC"/>
    <property type="match status" value="1"/>
</dbReference>
<dbReference type="SUPFAM" id="SSF82784">
    <property type="entry name" value="OsmC-like"/>
    <property type="match status" value="1"/>
</dbReference>
<protein>
    <recommendedName>
        <fullName>Peroxiredoxin OsmC</fullName>
        <ecNumber>1.11.1.-</ecNumber>
    </recommendedName>
    <alternativeName>
        <fullName>Osmotically-inducible protein C</fullName>
    </alternativeName>
</protein>
<sequence>MTIHKKGQAHWEGDIKRGKGTVSTESGVLNQQPYGFNTRFEGEKGTNPEELIGAAHAACFSMALSLMLGEAGFTPTSIDTTADVSLDKVDAGFAITKIALKSEVAVPGIDASTFDGIIQKAKAGCPVSQVLKAEITLDYQLKS</sequence>
<name>OSMC_SHIFL</name>
<feature type="initiator methionine" description="Removed" evidence="1">
    <location>
        <position position="1"/>
    </location>
</feature>
<feature type="chain" id="PRO_0000172730" description="Peroxiredoxin OsmC">
    <location>
        <begin position="2"/>
        <end position="143"/>
    </location>
</feature>
<feature type="region of interest" description="Disordered" evidence="2">
    <location>
        <begin position="1"/>
        <end position="27"/>
    </location>
</feature>
<feature type="modified residue" description="N6-acetyllysine" evidence="1">
    <location>
        <position position="16"/>
    </location>
</feature>
<organism>
    <name type="scientific">Shigella flexneri</name>
    <dbReference type="NCBI Taxonomy" id="623"/>
    <lineage>
        <taxon>Bacteria</taxon>
        <taxon>Pseudomonadati</taxon>
        <taxon>Pseudomonadota</taxon>
        <taxon>Gammaproteobacteria</taxon>
        <taxon>Enterobacterales</taxon>
        <taxon>Enterobacteriaceae</taxon>
        <taxon>Shigella</taxon>
    </lineage>
</organism>
<comment type="function">
    <text evidence="1">Preferentially metabolizes organic hydroperoxides over inorganic hydrogen peroxide.</text>
</comment>
<comment type="catalytic activity">
    <reaction>
        <text>a hydroperoxide + [protein]-dithiol = [protein]-disulfide + an alcohol + H2O</text>
        <dbReference type="Rhea" id="RHEA:10008"/>
        <dbReference type="Rhea" id="RHEA-COMP:10593"/>
        <dbReference type="Rhea" id="RHEA-COMP:10594"/>
        <dbReference type="ChEBI" id="CHEBI:15377"/>
        <dbReference type="ChEBI" id="CHEBI:29950"/>
        <dbReference type="ChEBI" id="CHEBI:30879"/>
        <dbReference type="ChEBI" id="CHEBI:35924"/>
        <dbReference type="ChEBI" id="CHEBI:50058"/>
    </reaction>
</comment>
<comment type="subcellular location">
    <subcellularLocation>
        <location evidence="1">Cytoplasm</location>
    </subcellularLocation>
</comment>
<comment type="similarity">
    <text evidence="3">Belongs to the OsmC/Ohr family.</text>
</comment>
<reference key="1">
    <citation type="journal article" date="2002" name="Nucleic Acids Res.">
        <title>Genome sequence of Shigella flexneri 2a: insights into pathogenicity through comparison with genomes of Escherichia coli K12 and O157.</title>
        <authorList>
            <person name="Jin Q."/>
            <person name="Yuan Z."/>
            <person name="Xu J."/>
            <person name="Wang Y."/>
            <person name="Shen Y."/>
            <person name="Lu W."/>
            <person name="Wang J."/>
            <person name="Liu H."/>
            <person name="Yang J."/>
            <person name="Yang F."/>
            <person name="Zhang X."/>
            <person name="Zhang J."/>
            <person name="Yang G."/>
            <person name="Wu H."/>
            <person name="Qu D."/>
            <person name="Dong J."/>
            <person name="Sun L."/>
            <person name="Xue Y."/>
            <person name="Zhao A."/>
            <person name="Gao Y."/>
            <person name="Zhu J."/>
            <person name="Kan B."/>
            <person name="Ding K."/>
            <person name="Chen S."/>
            <person name="Cheng H."/>
            <person name="Yao Z."/>
            <person name="He B."/>
            <person name="Chen R."/>
            <person name="Ma D."/>
            <person name="Qiang B."/>
            <person name="Wen Y."/>
            <person name="Hou Y."/>
            <person name="Yu J."/>
        </authorList>
    </citation>
    <scope>NUCLEOTIDE SEQUENCE [LARGE SCALE GENOMIC DNA]</scope>
    <source>
        <strain>301 / Serotype 2a</strain>
    </source>
</reference>
<reference key="2">
    <citation type="journal article" date="2003" name="Infect. Immun.">
        <title>Complete genome sequence and comparative genomics of Shigella flexneri serotype 2a strain 2457T.</title>
        <authorList>
            <person name="Wei J."/>
            <person name="Goldberg M.B."/>
            <person name="Burland V."/>
            <person name="Venkatesan M.M."/>
            <person name="Deng W."/>
            <person name="Fournier G."/>
            <person name="Mayhew G.F."/>
            <person name="Plunkett G. III"/>
            <person name="Rose D.J."/>
            <person name="Darling A."/>
            <person name="Mau B."/>
            <person name="Perna N.T."/>
            <person name="Payne S.M."/>
            <person name="Runyen-Janecky L.J."/>
            <person name="Zhou S."/>
            <person name="Schwartz D.C."/>
            <person name="Blattner F.R."/>
        </authorList>
    </citation>
    <scope>NUCLEOTIDE SEQUENCE [LARGE SCALE GENOMIC DNA]</scope>
    <source>
        <strain>ATCC 700930 / 2457T / Serotype 2a</strain>
    </source>
</reference>
<evidence type="ECO:0000250" key="1"/>
<evidence type="ECO:0000256" key="2">
    <source>
        <dbReference type="SAM" id="MobiDB-lite"/>
    </source>
</evidence>
<evidence type="ECO:0000305" key="3"/>
<gene>
    <name type="primary">osmC</name>
    <name type="ordered locus">SF1743</name>
    <name type="ordered locus">S1876</name>
</gene>